<dbReference type="EMBL" id="AY122323">
    <property type="protein sequence ID" value="AAM89292.1"/>
    <property type="molecule type" value="mRNA"/>
</dbReference>
<dbReference type="RefSeq" id="NP_742042.1">
    <property type="nucleotide sequence ID" value="NM_172045.1"/>
</dbReference>
<dbReference type="FunCoup" id="Q8K3F3">
    <property type="interactions" value="426"/>
</dbReference>
<dbReference type="STRING" id="10116.ENSRNOP00000040750"/>
<dbReference type="PhosphoSitePlus" id="Q8K3F3"/>
<dbReference type="jPOST" id="Q8K3F3"/>
<dbReference type="PaxDb" id="10116-ENSRNOP00000040750"/>
<dbReference type="GeneID" id="259225"/>
<dbReference type="KEGG" id="rno:259225"/>
<dbReference type="AGR" id="RGD:628702"/>
<dbReference type="CTD" id="26472"/>
<dbReference type="RGD" id="628702">
    <property type="gene designation" value="Ppp1r14b"/>
</dbReference>
<dbReference type="VEuPathDB" id="HostDB:ENSRNOG00000021151"/>
<dbReference type="eggNOG" id="KOG0824">
    <property type="taxonomic scope" value="Eukaryota"/>
</dbReference>
<dbReference type="HOGENOM" id="CLU_114155_1_0_1"/>
<dbReference type="InParanoid" id="Q8K3F3"/>
<dbReference type="OrthoDB" id="73042at9989"/>
<dbReference type="PhylomeDB" id="Q8K3F3"/>
<dbReference type="TreeFam" id="TF105546"/>
<dbReference type="PRO" id="PR:Q8K3F3"/>
<dbReference type="Proteomes" id="UP000002494">
    <property type="component" value="Chromosome 1"/>
</dbReference>
<dbReference type="Bgee" id="ENSRNOG00000021151">
    <property type="expression patterns" value="Expressed in thymus and 20 other cell types or tissues"/>
</dbReference>
<dbReference type="GO" id="GO:0005737">
    <property type="term" value="C:cytoplasm"/>
    <property type="evidence" value="ECO:0007669"/>
    <property type="project" value="UniProtKB-SubCell"/>
</dbReference>
<dbReference type="GO" id="GO:0019212">
    <property type="term" value="F:phosphatase inhibitor activity"/>
    <property type="evidence" value="ECO:0000314"/>
    <property type="project" value="RGD"/>
</dbReference>
<dbReference type="GO" id="GO:0019888">
    <property type="term" value="F:protein phosphatase regulator activity"/>
    <property type="evidence" value="ECO:0000314"/>
    <property type="project" value="RGD"/>
</dbReference>
<dbReference type="GO" id="GO:0004865">
    <property type="term" value="F:protein serine/threonine phosphatase inhibitor activity"/>
    <property type="evidence" value="ECO:0000318"/>
    <property type="project" value="GO_Central"/>
</dbReference>
<dbReference type="GO" id="GO:0045087">
    <property type="term" value="P:innate immune response"/>
    <property type="evidence" value="ECO:0000318"/>
    <property type="project" value="GO_Central"/>
</dbReference>
<dbReference type="FunFam" id="1.10.150.220:FF:000001">
    <property type="entry name" value="Phosphatase 1, regulatory (Inhibitor) subunit 14C"/>
    <property type="match status" value="1"/>
</dbReference>
<dbReference type="Gene3D" id="1.10.150.220">
    <property type="entry name" value="CPI-17"/>
    <property type="match status" value="1"/>
</dbReference>
<dbReference type="InterPro" id="IPR008025">
    <property type="entry name" value="CPI-17"/>
</dbReference>
<dbReference type="InterPro" id="IPR036658">
    <property type="entry name" value="CPI-17_sf"/>
</dbReference>
<dbReference type="PANTHER" id="PTHR16188">
    <property type="entry name" value="PROTEIN PHOSPHATASE 1 INHIBITOR POTENTIATED BY PROTEIN KINASE C"/>
    <property type="match status" value="1"/>
</dbReference>
<dbReference type="PANTHER" id="PTHR16188:SF5">
    <property type="entry name" value="PROTEIN PHOSPHATASE 1 REGULATORY SUBUNIT 14B"/>
    <property type="match status" value="1"/>
</dbReference>
<dbReference type="Pfam" id="PF05361">
    <property type="entry name" value="PP1_inhibitor"/>
    <property type="match status" value="1"/>
</dbReference>
<dbReference type="SUPFAM" id="SSF81790">
    <property type="entry name" value="Myosin phosphatase inhibitor 17kDa protein, CPI-17"/>
    <property type="match status" value="1"/>
</dbReference>
<gene>
    <name type="primary">Ppp1r14b</name>
    <name type="synonym">Phi1</name>
</gene>
<proteinExistence type="evidence at transcript level"/>
<feature type="initiator methionine" description="Removed" evidence="3">
    <location>
        <position position="1"/>
    </location>
</feature>
<feature type="chain" id="PRO_0000071493" description="Protein phosphatase 1 regulatory subunit 14B">
    <location>
        <begin position="2"/>
        <end position="147"/>
    </location>
</feature>
<feature type="region of interest" description="Disordered" evidence="5">
    <location>
        <begin position="1"/>
        <end position="55"/>
    </location>
</feature>
<feature type="coiled-coil region" evidence="4">
    <location>
        <begin position="61"/>
        <end position="103"/>
    </location>
</feature>
<feature type="compositionally biased region" description="Low complexity" evidence="5">
    <location>
        <begin position="1"/>
        <end position="15"/>
    </location>
</feature>
<feature type="modified residue" description="N-acetylalanine" evidence="3">
    <location>
        <position position="2"/>
    </location>
</feature>
<feature type="modified residue" description="Phosphoserine" evidence="3">
    <location>
        <position position="21"/>
    </location>
</feature>
<feature type="modified residue" description="Phosphotyrosine" evidence="3">
    <location>
        <position position="29"/>
    </location>
</feature>
<feature type="modified residue" description="Phosphoserine" evidence="3">
    <location>
        <position position="32"/>
    </location>
</feature>
<feature type="modified residue" description="Phosphothreonine" evidence="2">
    <location>
        <position position="57"/>
    </location>
</feature>
<protein>
    <recommendedName>
        <fullName>Protein phosphatase 1 regulatory subunit 14B</fullName>
    </recommendedName>
    <alternativeName>
        <fullName>Phosphatase holoenzyme inhibitor 1</fullName>
        <shortName>PHI-1</shortName>
    </alternativeName>
    <alternativeName>
        <fullName>Ubiquitous PKC-potentiated PP1 inhibitor</fullName>
    </alternativeName>
</protein>
<evidence type="ECO:0000250" key="1"/>
<evidence type="ECO:0000250" key="2">
    <source>
        <dbReference type="UniProtKB" id="Q62084"/>
    </source>
</evidence>
<evidence type="ECO:0000250" key="3">
    <source>
        <dbReference type="UniProtKB" id="Q96C90"/>
    </source>
</evidence>
<evidence type="ECO:0000255" key="4"/>
<evidence type="ECO:0000256" key="5">
    <source>
        <dbReference type="SAM" id="MobiDB-lite"/>
    </source>
</evidence>
<evidence type="ECO:0000305" key="6"/>
<keyword id="KW-0007">Acetylation</keyword>
<keyword id="KW-0175">Coiled coil</keyword>
<keyword id="KW-0963">Cytoplasm</keyword>
<keyword id="KW-0597">Phosphoprotein</keyword>
<keyword id="KW-0650">Protein phosphatase inhibitor</keyword>
<keyword id="KW-1185">Reference proteome</keyword>
<comment type="function">
    <text evidence="1">Inhibitor of PPP1CA. Has over 50-fold higher inhibitory activity when phosphorylated (By similarity).</text>
</comment>
<comment type="subcellular location">
    <subcellularLocation>
        <location evidence="6">Cytoplasm</location>
    </subcellularLocation>
</comment>
<comment type="PTM">
    <text evidence="1">Phosphorylated primarily on Thr-57 by PKC (in vitro). An unknown Ser is also phosphorylated by PKC (in vitro) (By similarity).</text>
</comment>
<comment type="similarity">
    <text evidence="6">Belongs to the PP1 inhibitor family.</text>
</comment>
<reference key="1">
    <citation type="journal article" date="2004" name="Biochem. J.">
        <title>GBPI, a novel gastrointestinal- and brain-specific PP1-inhibitory protein, is activated by PKC and inactivated by PKA.</title>
        <authorList>
            <person name="Liu Q.-R."/>
            <person name="Zhang P.-W."/>
            <person name="Lin Z."/>
            <person name="Li Q.-F."/>
            <person name="Woods A.S."/>
            <person name="Troncoso J."/>
            <person name="Uhl G.R."/>
        </authorList>
    </citation>
    <scope>NUCLEOTIDE SEQUENCE [MRNA]</scope>
    <source>
        <strain>Sprague-Dawley</strain>
    </source>
</reference>
<organism>
    <name type="scientific">Rattus norvegicus</name>
    <name type="common">Rat</name>
    <dbReference type="NCBI Taxonomy" id="10116"/>
    <lineage>
        <taxon>Eukaryota</taxon>
        <taxon>Metazoa</taxon>
        <taxon>Chordata</taxon>
        <taxon>Craniata</taxon>
        <taxon>Vertebrata</taxon>
        <taxon>Euteleostomi</taxon>
        <taxon>Mammalia</taxon>
        <taxon>Eutheria</taxon>
        <taxon>Euarchontoglires</taxon>
        <taxon>Glires</taxon>
        <taxon>Rodentia</taxon>
        <taxon>Myomorpha</taxon>
        <taxon>Muroidea</taxon>
        <taxon>Muridae</taxon>
        <taxon>Murinae</taxon>
        <taxon>Rattus</taxon>
    </lineage>
</organism>
<sequence length="147" mass="15957">MADSGPAGGAALAAPAPGPGSGSTGPRVYFQSPPGAAGEGPGGADDDGPVRRQGKVTVKYDRKELRKRLNLEEWILEQLTRLYDCQEEEIPELEIDVDELLDMESDDTRAARVKELLVDCYKPTEAFISGLLDKIRGMQKLSTPQKK</sequence>
<name>PP14B_RAT</name>
<accession>Q8K3F3</accession>